<protein>
    <recommendedName>
        <fullName>Uncharacterized protein KIAA1958</fullName>
    </recommendedName>
</protein>
<comment type="interaction">
    <interactant intactId="EBI-10181113">
        <id>Q8N8K9</id>
    </interactant>
    <interactant intactId="EBI-745213">
        <id>P29972</id>
        <label>AQP1</label>
    </interactant>
    <organismsDiffer>false</organismsDiffer>
    <experiments>3</experiments>
</comment>
<comment type="interaction">
    <interactant intactId="EBI-10181113">
        <id>Q8N8K9</id>
    </interactant>
    <interactant intactId="EBI-741885">
        <id>Q96LK0</id>
        <label>CEP19</label>
    </interactant>
    <organismsDiffer>false</organismsDiffer>
    <experiments>3</experiments>
</comment>
<comment type="interaction">
    <interactant intactId="EBI-10181113">
        <id>Q8N8K9</id>
    </interactant>
    <interactant intactId="EBI-10227704">
        <id>Q13057-2</id>
        <label>COASY</label>
    </interactant>
    <organismsDiffer>false</organismsDiffer>
    <experiments>3</experiments>
</comment>
<comment type="interaction">
    <interactant intactId="EBI-10181113">
        <id>Q8N8K9</id>
    </interactant>
    <interactant intactId="EBI-741626">
        <id>Q9H5Z6</id>
        <label>FAM124B</label>
    </interactant>
    <organismsDiffer>false</organismsDiffer>
    <experiments>3</experiments>
</comment>
<comment type="interaction">
    <interactant intactId="EBI-10181113">
        <id>Q8N8K9</id>
    </interactant>
    <interactant intactId="EBI-720116">
        <id>P60520</id>
        <label>GABARAPL2</label>
    </interactant>
    <organismsDiffer>false</organismsDiffer>
    <experiments>7</experiments>
</comment>
<comment type="interaction">
    <interactant intactId="EBI-10181113">
        <id>Q8N8K9</id>
    </interactant>
    <interactant intactId="EBI-2798728">
        <id>P61968</id>
        <label>LMO4</label>
    </interactant>
    <organismsDiffer>false</organismsDiffer>
    <experiments>6</experiments>
</comment>
<comment type="interaction">
    <interactant intactId="EBI-10181113">
        <id>Q8N8K9</id>
    </interactant>
    <interactant intactId="EBI-348259">
        <id>Q96EZ8</id>
        <label>MCRS1</label>
    </interactant>
    <organismsDiffer>false</organismsDiffer>
    <experiments>3</experiments>
</comment>
<comment type="interaction">
    <interactant intactId="EBI-10181113">
        <id>Q8N8K9</id>
    </interactant>
    <interactant intactId="EBI-724442">
        <id>P57060</id>
        <label>RWDD2B</label>
    </interactant>
    <organismsDiffer>false</organismsDiffer>
    <experiments>3</experiments>
</comment>
<comment type="interaction">
    <interactant intactId="EBI-10181113">
        <id>Q8N8K9</id>
    </interactant>
    <interactant intactId="EBI-714146">
        <id>O14543</id>
        <label>SOCS3</label>
    </interactant>
    <organismsDiffer>false</organismsDiffer>
    <experiments>6</experiments>
</comment>
<comment type="interaction">
    <interactant intactId="EBI-10181113">
        <id>Q8N8K9</id>
    </interactant>
    <interactant intactId="EBI-10276615">
        <id>Q8WUK8</id>
        <label>STAC</label>
    </interactant>
    <organismsDiffer>false</organismsDiffer>
    <experiments>3</experiments>
</comment>
<comment type="interaction">
    <interactant intactId="EBI-10181113">
        <id>Q8N8K9</id>
    </interactant>
    <interactant intactId="EBI-2652799">
        <id>Q99469</id>
        <label>STAC</label>
    </interactant>
    <organismsDiffer>false</organismsDiffer>
    <experiments>3</experiments>
</comment>
<comment type="interaction">
    <interactant intactId="EBI-10181113">
        <id>Q8N8K9</id>
    </interactant>
    <interactant intactId="EBI-710310">
        <id>Q15560</id>
        <label>TCEA2</label>
    </interactant>
    <organismsDiffer>false</organismsDiffer>
    <experiments>6</experiments>
</comment>
<comment type="interaction">
    <interactant intactId="EBI-10181113">
        <id>Q8N8K9</id>
    </interactant>
    <interactant intactId="EBI-11955057">
        <id>Q8N8B7-2</id>
        <label>TCEANC</label>
    </interactant>
    <organismsDiffer>false</organismsDiffer>
    <experiments>3</experiments>
</comment>
<comment type="interaction">
    <interactant intactId="EBI-10181113">
        <id>Q8N8K9</id>
    </interactant>
    <interactant intactId="EBI-2828217">
        <id>O43422</id>
        <label>THAP12</label>
    </interactant>
    <organismsDiffer>false</organismsDiffer>
    <experiments>3</experiments>
</comment>
<comment type="alternative products">
    <event type="alternative splicing"/>
    <isoform>
        <id>Q8N8K9-1</id>
        <name>1</name>
        <sequence type="displayed"/>
    </isoform>
    <isoform>
        <id>Q8N8K9-2</id>
        <name>2</name>
        <sequence type="described" ref="VSP_015146"/>
    </isoform>
    <isoform>
        <id>Q8N8K9-3</id>
        <name>3</name>
        <sequence type="described" ref="VSP_054654"/>
    </isoform>
</comment>
<comment type="sequence caution" evidence="3">
    <conflict type="erroneous initiation">
        <sequence resource="EMBL-CDS" id="BAB71114"/>
    </conflict>
</comment>
<accession>Q8N8K9</accession>
<accession>B7ZKW6</accession>
<accession>Q2M336</accession>
<accession>Q5T252</accession>
<accession>Q8TF43</accession>
<accession>Q96N02</accession>
<name>K1958_HUMAN</name>
<keyword id="KW-0025">Alternative splicing</keyword>
<keyword id="KW-1017">Isopeptide bond</keyword>
<keyword id="KW-0597">Phosphoprotein</keyword>
<keyword id="KW-1267">Proteomics identification</keyword>
<keyword id="KW-1185">Reference proteome</keyword>
<keyword id="KW-0832">Ubl conjugation</keyword>
<sequence>MEDCLHTSSENLSKLVSWAHSHGTICSLIPNLKHLLSEGSHGNLTAMWGCSAGHAYHWPLTATCRAGSQERVCFQDNRSFNSDSPSIIGVPSETQTSPVERYPGRPVKAKLDCNRTRDSCDFSYCSEPSELDETVEEYEDENTLFDMVCESSVTDEDSDFEPQTQRPQSIARKRPGVVPSSLHSSSQTQMVDECSNDVIIKKIKQEIPEDYYIVANAELTGGVDGPALSLTQMAKPKPQTHAGPSCVGSAKLIPHVTSAISTELDPHGMSASPSVISRPIVQKTARVSLASPNRGPPGTHGTNQQVAMQMPVSTSHPNKQISIPLSALQLPGQDEQVASEEFLSHLPSQVSSCEVALSPSVNTEPEVSSSQQQPPVAPAITTEATAQCIPAYSTKLNKFPVFNINDDLNDLCTSAVSPNTTKATRYALNVWRYWCMTNGLKDHTDITKIPAVKLNELLENFYVTVKKSDGSDFLATSLHAIRRGLDRILKNAGVGFSITSSTFSSSTKKLKEKLWVLSKAGMSGARSRNIVYFSLSDEEEMWQAGCLGDDSPITLLSTVVKYNSQYLNMRTLQEHADLMYGDIELLKDPQNQPYFARTDSVKRESRSGSTRVCHGKIYHEHSRGHKQCPYCLLYKYMYIHRPPTQMEAKSPFYLTARKEATDMGSVWYEEQRMGLRSLRGIVPNLAKKVKLENCENFTFVSFTQVSRRLGSHSCCQ</sequence>
<reference key="1">
    <citation type="journal article" date="2004" name="Nat. Genet.">
        <title>Complete sequencing and characterization of 21,243 full-length human cDNAs.</title>
        <authorList>
            <person name="Ota T."/>
            <person name="Suzuki Y."/>
            <person name="Nishikawa T."/>
            <person name="Otsuki T."/>
            <person name="Sugiyama T."/>
            <person name="Irie R."/>
            <person name="Wakamatsu A."/>
            <person name="Hayashi K."/>
            <person name="Sato H."/>
            <person name="Nagai K."/>
            <person name="Kimura K."/>
            <person name="Makita H."/>
            <person name="Sekine M."/>
            <person name="Obayashi M."/>
            <person name="Nishi T."/>
            <person name="Shibahara T."/>
            <person name="Tanaka T."/>
            <person name="Ishii S."/>
            <person name="Yamamoto J."/>
            <person name="Saito K."/>
            <person name="Kawai Y."/>
            <person name="Isono Y."/>
            <person name="Nakamura Y."/>
            <person name="Nagahari K."/>
            <person name="Murakami K."/>
            <person name="Yasuda T."/>
            <person name="Iwayanagi T."/>
            <person name="Wagatsuma M."/>
            <person name="Shiratori A."/>
            <person name="Sudo H."/>
            <person name="Hosoiri T."/>
            <person name="Kaku Y."/>
            <person name="Kodaira H."/>
            <person name="Kondo H."/>
            <person name="Sugawara M."/>
            <person name="Takahashi M."/>
            <person name="Kanda K."/>
            <person name="Yokoi T."/>
            <person name="Furuya T."/>
            <person name="Kikkawa E."/>
            <person name="Omura Y."/>
            <person name="Abe K."/>
            <person name="Kamihara K."/>
            <person name="Katsuta N."/>
            <person name="Sato K."/>
            <person name="Tanikawa M."/>
            <person name="Yamazaki M."/>
            <person name="Ninomiya K."/>
            <person name="Ishibashi T."/>
            <person name="Yamashita H."/>
            <person name="Murakawa K."/>
            <person name="Fujimori K."/>
            <person name="Tanai H."/>
            <person name="Kimata M."/>
            <person name="Watanabe M."/>
            <person name="Hiraoka S."/>
            <person name="Chiba Y."/>
            <person name="Ishida S."/>
            <person name="Ono Y."/>
            <person name="Takiguchi S."/>
            <person name="Watanabe S."/>
            <person name="Yosida M."/>
            <person name="Hotuta T."/>
            <person name="Kusano J."/>
            <person name="Kanehori K."/>
            <person name="Takahashi-Fujii A."/>
            <person name="Hara H."/>
            <person name="Tanase T.-O."/>
            <person name="Nomura Y."/>
            <person name="Togiya S."/>
            <person name="Komai F."/>
            <person name="Hara R."/>
            <person name="Takeuchi K."/>
            <person name="Arita M."/>
            <person name="Imose N."/>
            <person name="Musashino K."/>
            <person name="Yuuki H."/>
            <person name="Oshima A."/>
            <person name="Sasaki N."/>
            <person name="Aotsuka S."/>
            <person name="Yoshikawa Y."/>
            <person name="Matsunawa H."/>
            <person name="Ichihara T."/>
            <person name="Shiohata N."/>
            <person name="Sano S."/>
            <person name="Moriya S."/>
            <person name="Momiyama H."/>
            <person name="Satoh N."/>
            <person name="Takami S."/>
            <person name="Terashima Y."/>
            <person name="Suzuki O."/>
            <person name="Nakagawa S."/>
            <person name="Senoh A."/>
            <person name="Mizoguchi H."/>
            <person name="Goto Y."/>
            <person name="Shimizu F."/>
            <person name="Wakebe H."/>
            <person name="Hishigaki H."/>
            <person name="Watanabe T."/>
            <person name="Sugiyama A."/>
            <person name="Takemoto M."/>
            <person name="Kawakami B."/>
            <person name="Yamazaki M."/>
            <person name="Watanabe K."/>
            <person name="Kumagai A."/>
            <person name="Itakura S."/>
            <person name="Fukuzumi Y."/>
            <person name="Fujimori Y."/>
            <person name="Komiyama M."/>
            <person name="Tashiro H."/>
            <person name="Tanigami A."/>
            <person name="Fujiwara T."/>
            <person name="Ono T."/>
            <person name="Yamada K."/>
            <person name="Fujii Y."/>
            <person name="Ozaki K."/>
            <person name="Hirao M."/>
            <person name="Ohmori Y."/>
            <person name="Kawabata A."/>
            <person name="Hikiji T."/>
            <person name="Kobatake N."/>
            <person name="Inagaki H."/>
            <person name="Ikema Y."/>
            <person name="Okamoto S."/>
            <person name="Okitani R."/>
            <person name="Kawakami T."/>
            <person name="Noguchi S."/>
            <person name="Itoh T."/>
            <person name="Shigeta K."/>
            <person name="Senba T."/>
            <person name="Matsumura K."/>
            <person name="Nakajima Y."/>
            <person name="Mizuno T."/>
            <person name="Morinaga M."/>
            <person name="Sasaki M."/>
            <person name="Togashi T."/>
            <person name="Oyama M."/>
            <person name="Hata H."/>
            <person name="Watanabe M."/>
            <person name="Komatsu T."/>
            <person name="Mizushima-Sugano J."/>
            <person name="Satoh T."/>
            <person name="Shirai Y."/>
            <person name="Takahashi Y."/>
            <person name="Nakagawa K."/>
            <person name="Okumura K."/>
            <person name="Nagase T."/>
            <person name="Nomura N."/>
            <person name="Kikuchi H."/>
            <person name="Masuho Y."/>
            <person name="Yamashita R."/>
            <person name="Nakai K."/>
            <person name="Yada T."/>
            <person name="Nakamura Y."/>
            <person name="Ohara O."/>
            <person name="Isogai T."/>
            <person name="Sugano S."/>
        </authorList>
    </citation>
    <scope>NUCLEOTIDE SEQUENCE [LARGE SCALE MRNA] (ISOFORM 1)</scope>
    <source>
        <tissue>Brain</tissue>
        <tissue>Teratocarcinoma</tissue>
    </source>
</reference>
<reference key="2">
    <citation type="journal article" date="2004" name="Nature">
        <title>DNA sequence and analysis of human chromosome 9.</title>
        <authorList>
            <person name="Humphray S.J."/>
            <person name="Oliver K."/>
            <person name="Hunt A.R."/>
            <person name="Plumb R.W."/>
            <person name="Loveland J.E."/>
            <person name="Howe K.L."/>
            <person name="Andrews T.D."/>
            <person name="Searle S."/>
            <person name="Hunt S.E."/>
            <person name="Scott C.E."/>
            <person name="Jones M.C."/>
            <person name="Ainscough R."/>
            <person name="Almeida J.P."/>
            <person name="Ambrose K.D."/>
            <person name="Ashwell R.I.S."/>
            <person name="Babbage A.K."/>
            <person name="Babbage S."/>
            <person name="Bagguley C.L."/>
            <person name="Bailey J."/>
            <person name="Banerjee R."/>
            <person name="Barker D.J."/>
            <person name="Barlow K.F."/>
            <person name="Bates K."/>
            <person name="Beasley H."/>
            <person name="Beasley O."/>
            <person name="Bird C.P."/>
            <person name="Bray-Allen S."/>
            <person name="Brown A.J."/>
            <person name="Brown J.Y."/>
            <person name="Burford D."/>
            <person name="Burrill W."/>
            <person name="Burton J."/>
            <person name="Carder C."/>
            <person name="Carter N.P."/>
            <person name="Chapman J.C."/>
            <person name="Chen Y."/>
            <person name="Clarke G."/>
            <person name="Clark S.Y."/>
            <person name="Clee C.M."/>
            <person name="Clegg S."/>
            <person name="Collier R.E."/>
            <person name="Corby N."/>
            <person name="Crosier M."/>
            <person name="Cummings A.T."/>
            <person name="Davies J."/>
            <person name="Dhami P."/>
            <person name="Dunn M."/>
            <person name="Dutta I."/>
            <person name="Dyer L.W."/>
            <person name="Earthrowl M.E."/>
            <person name="Faulkner L."/>
            <person name="Fleming C.J."/>
            <person name="Frankish A."/>
            <person name="Frankland J.A."/>
            <person name="French L."/>
            <person name="Fricker D.G."/>
            <person name="Garner P."/>
            <person name="Garnett J."/>
            <person name="Ghori J."/>
            <person name="Gilbert J.G.R."/>
            <person name="Glison C."/>
            <person name="Grafham D.V."/>
            <person name="Gribble S."/>
            <person name="Griffiths C."/>
            <person name="Griffiths-Jones S."/>
            <person name="Grocock R."/>
            <person name="Guy J."/>
            <person name="Hall R.E."/>
            <person name="Hammond S."/>
            <person name="Harley J.L."/>
            <person name="Harrison E.S.I."/>
            <person name="Hart E.A."/>
            <person name="Heath P.D."/>
            <person name="Henderson C.D."/>
            <person name="Hopkins B.L."/>
            <person name="Howard P.J."/>
            <person name="Howden P.J."/>
            <person name="Huckle E."/>
            <person name="Johnson C."/>
            <person name="Johnson D."/>
            <person name="Joy A.A."/>
            <person name="Kay M."/>
            <person name="Keenan S."/>
            <person name="Kershaw J.K."/>
            <person name="Kimberley A.M."/>
            <person name="King A."/>
            <person name="Knights A."/>
            <person name="Laird G.K."/>
            <person name="Langford C."/>
            <person name="Lawlor S."/>
            <person name="Leongamornlert D.A."/>
            <person name="Leversha M."/>
            <person name="Lloyd C."/>
            <person name="Lloyd D.M."/>
            <person name="Lovell J."/>
            <person name="Martin S."/>
            <person name="Mashreghi-Mohammadi M."/>
            <person name="Matthews L."/>
            <person name="McLaren S."/>
            <person name="McLay K.E."/>
            <person name="McMurray A."/>
            <person name="Milne S."/>
            <person name="Nickerson T."/>
            <person name="Nisbett J."/>
            <person name="Nordsiek G."/>
            <person name="Pearce A.V."/>
            <person name="Peck A.I."/>
            <person name="Porter K.M."/>
            <person name="Pandian R."/>
            <person name="Pelan S."/>
            <person name="Phillimore B."/>
            <person name="Povey S."/>
            <person name="Ramsey Y."/>
            <person name="Rand V."/>
            <person name="Scharfe M."/>
            <person name="Sehra H.K."/>
            <person name="Shownkeen R."/>
            <person name="Sims S.K."/>
            <person name="Skuce C.D."/>
            <person name="Smith M."/>
            <person name="Steward C.A."/>
            <person name="Swarbreck D."/>
            <person name="Sycamore N."/>
            <person name="Tester J."/>
            <person name="Thorpe A."/>
            <person name="Tracey A."/>
            <person name="Tromans A."/>
            <person name="Thomas D.W."/>
            <person name="Wall M."/>
            <person name="Wallis J.M."/>
            <person name="West A.P."/>
            <person name="Whitehead S.L."/>
            <person name="Willey D.L."/>
            <person name="Williams S.A."/>
            <person name="Wilming L."/>
            <person name="Wray P.W."/>
            <person name="Young L."/>
            <person name="Ashurst J.L."/>
            <person name="Coulson A."/>
            <person name="Blocker H."/>
            <person name="Durbin R.M."/>
            <person name="Sulston J.E."/>
            <person name="Hubbard T."/>
            <person name="Jackson M.J."/>
            <person name="Bentley D.R."/>
            <person name="Beck S."/>
            <person name="Rogers J."/>
            <person name="Dunham I."/>
        </authorList>
    </citation>
    <scope>NUCLEOTIDE SEQUENCE [LARGE SCALE GENOMIC DNA]</scope>
</reference>
<reference key="3">
    <citation type="journal article" date="2004" name="Genome Res.">
        <title>The status, quality, and expansion of the NIH full-length cDNA project: the Mammalian Gene Collection (MGC).</title>
        <authorList>
            <consortium name="The MGC Project Team"/>
        </authorList>
    </citation>
    <scope>NUCLEOTIDE SEQUENCE [LARGE SCALE MRNA] (ISOFORMS 1 AND 3)</scope>
    <source>
        <tissue>Brain</tissue>
    </source>
</reference>
<reference key="4">
    <citation type="journal article" date="2001" name="DNA Res.">
        <title>Prediction of the coding sequences of unidentified human genes. XXII. The complete sequences of 50 new cDNA clones which code for large proteins.</title>
        <authorList>
            <person name="Nagase T."/>
            <person name="Kikuno R."/>
            <person name="Ohara O."/>
        </authorList>
    </citation>
    <scope>NUCLEOTIDE SEQUENCE [LARGE SCALE MRNA] OF 110-716 (ISOFORM 1)</scope>
</reference>
<reference key="5">
    <citation type="journal article" date="2009" name="Sci. Signal.">
        <title>Quantitative phosphoproteomic analysis of T cell receptor signaling reveals system-wide modulation of protein-protein interactions.</title>
        <authorList>
            <person name="Mayya V."/>
            <person name="Lundgren D.H."/>
            <person name="Hwang S.-I."/>
            <person name="Rezaul K."/>
            <person name="Wu L."/>
            <person name="Eng J.K."/>
            <person name="Rodionov V."/>
            <person name="Han D.K."/>
        </authorList>
    </citation>
    <scope>PHOSPHORYLATION [LARGE SCALE ANALYSIS] AT SER-97</scope>
    <scope>IDENTIFICATION BY MASS SPECTROMETRY [LARGE SCALE ANALYSIS]</scope>
    <source>
        <tissue>Leukemic T-cell</tissue>
    </source>
</reference>
<reference key="6">
    <citation type="journal article" date="2013" name="J. Proteome Res.">
        <title>Toward a comprehensive characterization of a human cancer cell phosphoproteome.</title>
        <authorList>
            <person name="Zhou H."/>
            <person name="Di Palma S."/>
            <person name="Preisinger C."/>
            <person name="Peng M."/>
            <person name="Polat A.N."/>
            <person name="Heck A.J."/>
            <person name="Mohammed S."/>
        </authorList>
    </citation>
    <scope>IDENTIFICATION BY MASS SPECTROMETRY [LARGE SCALE ANALYSIS]</scope>
    <source>
        <tissue>Cervix carcinoma</tissue>
    </source>
</reference>
<reference key="7">
    <citation type="journal article" date="2017" name="Nat. Struct. Mol. Biol.">
        <title>Site-specific mapping of the human SUMO proteome reveals co-modification with phosphorylation.</title>
        <authorList>
            <person name="Hendriks I.A."/>
            <person name="Lyon D."/>
            <person name="Young C."/>
            <person name="Jensen L.J."/>
            <person name="Vertegaal A.C."/>
            <person name="Nielsen M.L."/>
        </authorList>
    </citation>
    <scope>SUMOYLATION [LARGE SCALE ANALYSIS] AT LYS-201; LYS-204; LYS-237; LYS-283 AND LYS-626</scope>
    <scope>IDENTIFICATION BY MASS SPECTROMETRY [LARGE SCALE ANALYSIS]</scope>
</reference>
<organism>
    <name type="scientific">Homo sapiens</name>
    <name type="common">Human</name>
    <dbReference type="NCBI Taxonomy" id="9606"/>
    <lineage>
        <taxon>Eukaryota</taxon>
        <taxon>Metazoa</taxon>
        <taxon>Chordata</taxon>
        <taxon>Craniata</taxon>
        <taxon>Vertebrata</taxon>
        <taxon>Euteleostomi</taxon>
        <taxon>Mammalia</taxon>
        <taxon>Eutheria</taxon>
        <taxon>Euarchontoglires</taxon>
        <taxon>Primates</taxon>
        <taxon>Haplorrhini</taxon>
        <taxon>Catarrhini</taxon>
        <taxon>Hominidae</taxon>
        <taxon>Homo</taxon>
    </lineage>
</organism>
<evidence type="ECO:0000256" key="1">
    <source>
        <dbReference type="SAM" id="MobiDB-lite"/>
    </source>
</evidence>
<evidence type="ECO:0000303" key="2">
    <source>
    </source>
</evidence>
<evidence type="ECO:0000305" key="3"/>
<evidence type="ECO:0007744" key="4">
    <source>
    </source>
</evidence>
<evidence type="ECO:0007744" key="5">
    <source>
    </source>
</evidence>
<proteinExistence type="evidence at protein level"/>
<feature type="chain" id="PRO_0000050811" description="Uncharacterized protein KIAA1958">
    <location>
        <begin position="1"/>
        <end position="716"/>
    </location>
</feature>
<feature type="region of interest" description="Disordered" evidence="1">
    <location>
        <begin position="84"/>
        <end position="103"/>
    </location>
</feature>
<feature type="region of interest" description="Disordered" evidence="1">
    <location>
        <begin position="153"/>
        <end position="189"/>
    </location>
</feature>
<feature type="modified residue" description="Phosphoserine" evidence="4">
    <location>
        <position position="97"/>
    </location>
</feature>
<feature type="cross-link" description="Glycyl lysine isopeptide (Lys-Gly) (interchain with G-Cter in SUMO2)" evidence="5">
    <location>
        <position position="201"/>
    </location>
</feature>
<feature type="cross-link" description="Glycyl lysine isopeptide (Lys-Gly) (interchain with G-Cter in SUMO2)" evidence="5">
    <location>
        <position position="204"/>
    </location>
</feature>
<feature type="cross-link" description="Glycyl lysine isopeptide (Lys-Gly) (interchain with G-Cter in SUMO2)" evidence="5">
    <location>
        <position position="237"/>
    </location>
</feature>
<feature type="cross-link" description="Glycyl lysine isopeptide (Lys-Gly) (interchain with G-Cter in SUMO2)" evidence="5">
    <location>
        <position position="283"/>
    </location>
</feature>
<feature type="cross-link" description="Glycyl lysine isopeptide (Lys-Gly) (interchain with G-Cter in SUMO2)" evidence="5">
    <location>
        <position position="626"/>
    </location>
</feature>
<feature type="splice variant" id="VSP_054654" description="In isoform 3." evidence="2">
    <original>PA</original>
    <variation>PDQDERAAELSREQNEKTIRSTQTALRNFP</variation>
    <location>
        <begin position="390"/>
        <end position="391"/>
    </location>
</feature>
<feature type="splice variant" id="VSP_015146" description="In isoform 2." evidence="3">
    <original>AYSTKLNKFPVFNINDDLNDLCTSAVSPNTTKATRYALNVWRYWCMTNGLKDHTDITKIPAVKLNELLENFYVTVKKSDGSDFLATSLHAIRRGLDRILKNAGVGFSITSSTFSSSTKKLKEKLWVLSKAGMSGARSRNIVYFSLSDEEEMWQAGCLGDDSPITLLSTVVKYNSQYLNMRTLQEHADLMYGDIELLKDPQNQPYFARTDSVKRESRSGSTRVCHGKIYHEHSRGHKQCPYCLLYKYMYIHRPPTQMEAKSPFYLTARKEATDMGSVWYEEQRMGLRSLRGIVPNLAKKVKLENCENFTFVSFTQVSRRLGSHSCCQ</original>
    <variation>DQDERAAELSREQNEKTIRSTQTALRNFREFLISKYPSETREIYVIPCKELDAYLASFFVDARQKDGSEYEPNSLANYQCGLERYLKEHRYGYSITRDKEFKRSQEALKQKQIELRCKGKGNKPHKSMKLTFADELILRKRGLLSRYNPEGLLNLVWLNNTKAFGHCTGFHGSTLKWGDIRLRVTETGLEYLEWMGQDTGDLNAKTKRGGTDSRVYATQHAPQTCPVQDYKEYAQRRPPAMRYEDAPFYLSIKPVVNLAALHWYNCQALGKNKLAKMVKTMCEKGNIPGRKTNFSVYQSCSTLSEAQSNQLVLICNNLSQQAAQSVAGHSNNGNFIVSASYDSSSDTA</variation>
    <location>
        <begin position="391"/>
        <end position="716"/>
    </location>
</feature>
<feature type="sequence conflict" description="In Ref. 1; BAB71114." evidence="3" ref="1">
    <original>M</original>
    <variation>V</variation>
    <location>
        <position position="541"/>
    </location>
</feature>
<gene>
    <name type="primary">KIAA1958</name>
</gene>
<dbReference type="EMBL" id="AK096613">
    <property type="protein sequence ID" value="BAC04827.1"/>
    <property type="molecule type" value="mRNA"/>
</dbReference>
<dbReference type="EMBL" id="AK056181">
    <property type="protein sequence ID" value="BAB71114.1"/>
    <property type="status" value="ALT_INIT"/>
    <property type="molecule type" value="mRNA"/>
</dbReference>
<dbReference type="EMBL" id="AL162732">
    <property type="status" value="NOT_ANNOTATED_CDS"/>
    <property type="molecule type" value="Genomic_DNA"/>
</dbReference>
<dbReference type="EMBL" id="AL390067">
    <property type="status" value="NOT_ANNOTATED_CDS"/>
    <property type="molecule type" value="Genomic_DNA"/>
</dbReference>
<dbReference type="EMBL" id="AL445187">
    <property type="status" value="NOT_ANNOTATED_CDS"/>
    <property type="molecule type" value="Genomic_DNA"/>
</dbReference>
<dbReference type="EMBL" id="BC105048">
    <property type="protein sequence ID" value="AAI05049.1"/>
    <property type="molecule type" value="mRNA"/>
</dbReference>
<dbReference type="EMBL" id="BC113515">
    <property type="protein sequence ID" value="AAI13516.1"/>
    <property type="molecule type" value="mRNA"/>
</dbReference>
<dbReference type="EMBL" id="BC143424">
    <property type="protein sequence ID" value="AAI43425.1"/>
    <property type="molecule type" value="mRNA"/>
</dbReference>
<dbReference type="EMBL" id="AB075838">
    <property type="protein sequence ID" value="BAB85544.1"/>
    <property type="molecule type" value="mRNA"/>
</dbReference>
<dbReference type="CCDS" id="CCDS35108.1">
    <molecule id="Q8N8K9-1"/>
</dbReference>
<dbReference type="CCDS" id="CCDS69642.1">
    <molecule id="Q8N8K9-3"/>
</dbReference>
<dbReference type="RefSeq" id="NP_001273965.1">
    <molecule id="Q8N8K9-3"/>
    <property type="nucleotide sequence ID" value="NM_001287036.2"/>
</dbReference>
<dbReference type="RefSeq" id="NP_001273967.1">
    <property type="nucleotide sequence ID" value="NM_001287038.1"/>
</dbReference>
<dbReference type="RefSeq" id="NP_597722.1">
    <molecule id="Q8N8K9-1"/>
    <property type="nucleotide sequence ID" value="NM_133465.4"/>
</dbReference>
<dbReference type="RefSeq" id="XP_011516613.1">
    <molecule id="Q8N8K9-2"/>
    <property type="nucleotide sequence ID" value="XM_011518311.3"/>
</dbReference>
<dbReference type="RefSeq" id="XP_054218133.1">
    <molecule id="Q8N8K9-2"/>
    <property type="nucleotide sequence ID" value="XM_054362158.1"/>
</dbReference>
<dbReference type="RefSeq" id="XP_054218134.1">
    <molecule id="Q8N8K9-1"/>
    <property type="nucleotide sequence ID" value="XM_054362159.1"/>
</dbReference>
<dbReference type="RefSeq" id="XP_054218135.1">
    <molecule id="Q8N8K9-3"/>
    <property type="nucleotide sequence ID" value="XM_054362160.1"/>
</dbReference>
<dbReference type="BioGRID" id="127680">
    <property type="interactions" value="22"/>
</dbReference>
<dbReference type="FunCoup" id="Q8N8K9">
    <property type="interactions" value="358"/>
</dbReference>
<dbReference type="IntAct" id="Q8N8K9">
    <property type="interactions" value="17"/>
</dbReference>
<dbReference type="STRING" id="9606.ENSP00000440504"/>
<dbReference type="GlyGen" id="Q8N8K9">
    <property type="glycosylation" value="1 site, 1 O-linked glycan (1 site)"/>
</dbReference>
<dbReference type="iPTMnet" id="Q8N8K9"/>
<dbReference type="PhosphoSitePlus" id="Q8N8K9"/>
<dbReference type="BioMuta" id="KIAA1958"/>
<dbReference type="DMDM" id="73621119"/>
<dbReference type="jPOST" id="Q8N8K9"/>
<dbReference type="MassIVE" id="Q8N8K9"/>
<dbReference type="PaxDb" id="9606-ENSP00000440504"/>
<dbReference type="PeptideAtlas" id="Q8N8K9"/>
<dbReference type="ProteomicsDB" id="7199"/>
<dbReference type="ProteomicsDB" id="72432">
    <molecule id="Q8N8K9-1"/>
</dbReference>
<dbReference type="ProteomicsDB" id="72433">
    <molecule id="Q8N8K9-2"/>
</dbReference>
<dbReference type="Antibodypedia" id="15233">
    <property type="antibodies" value="33 antibodies from 13 providers"/>
</dbReference>
<dbReference type="DNASU" id="158405"/>
<dbReference type="Ensembl" id="ENST00000337530.11">
    <molecule id="Q8N8K9-1"/>
    <property type="protein sequence ID" value="ENSP00000336940.6"/>
    <property type="gene ID" value="ENSG00000165185.15"/>
</dbReference>
<dbReference type="Ensembl" id="ENST00000374244.3">
    <molecule id="Q8N8K9-2"/>
    <property type="protein sequence ID" value="ENSP00000363362.3"/>
    <property type="gene ID" value="ENSG00000165185.15"/>
</dbReference>
<dbReference type="Ensembl" id="ENST00000536272.5">
    <molecule id="Q8N8K9-3"/>
    <property type="protein sequence ID" value="ENSP00000440504.1"/>
    <property type="gene ID" value="ENSG00000165185.15"/>
</dbReference>
<dbReference type="GeneID" id="158405"/>
<dbReference type="KEGG" id="hsa:158405"/>
<dbReference type="MANE-Select" id="ENST00000337530.11">
    <property type="protein sequence ID" value="ENSP00000336940.6"/>
    <property type="RefSeq nucleotide sequence ID" value="NM_133465.4"/>
    <property type="RefSeq protein sequence ID" value="NP_597722.1"/>
</dbReference>
<dbReference type="UCSC" id="uc004bgf.3">
    <molecule id="Q8N8K9-1"/>
    <property type="organism name" value="human"/>
</dbReference>
<dbReference type="AGR" id="HGNC:23427"/>
<dbReference type="CTD" id="158405"/>
<dbReference type="DisGeNET" id="158405"/>
<dbReference type="GeneCards" id="KIAA1958"/>
<dbReference type="HGNC" id="HGNC:23427">
    <property type="gene designation" value="KIAA1958"/>
</dbReference>
<dbReference type="HPA" id="ENSG00000165185">
    <property type="expression patterns" value="Low tissue specificity"/>
</dbReference>
<dbReference type="MIM" id="617390">
    <property type="type" value="gene"/>
</dbReference>
<dbReference type="neXtProt" id="NX_Q8N8K9"/>
<dbReference type="OpenTargets" id="ENSG00000165185"/>
<dbReference type="PharmGKB" id="PA134937806"/>
<dbReference type="VEuPathDB" id="HostDB:ENSG00000165185"/>
<dbReference type="eggNOG" id="KOG3612">
    <property type="taxonomic scope" value="Eukaryota"/>
</dbReference>
<dbReference type="GeneTree" id="ENSGT00440000039527"/>
<dbReference type="HOGENOM" id="CLU_022431_0_0_1"/>
<dbReference type="InParanoid" id="Q8N8K9"/>
<dbReference type="OMA" id="YWCVTNG"/>
<dbReference type="OrthoDB" id="5957988at2759"/>
<dbReference type="PAN-GO" id="Q8N8K9">
    <property type="GO annotations" value="0 GO annotations based on evolutionary models"/>
</dbReference>
<dbReference type="PhylomeDB" id="Q8N8K9"/>
<dbReference type="TreeFam" id="TF332895"/>
<dbReference type="PathwayCommons" id="Q8N8K9"/>
<dbReference type="SignaLink" id="Q8N8K9"/>
<dbReference type="BioGRID-ORCS" id="158405">
    <property type="hits" value="15 hits in 1160 CRISPR screens"/>
</dbReference>
<dbReference type="ChiTaRS" id="KIAA1958">
    <property type="organism name" value="human"/>
</dbReference>
<dbReference type="GeneWiki" id="KIAA1958"/>
<dbReference type="GenomeRNAi" id="158405"/>
<dbReference type="Pharos" id="Q8N8K9">
    <property type="development level" value="Tdark"/>
</dbReference>
<dbReference type="PRO" id="PR:Q8N8K9"/>
<dbReference type="Proteomes" id="UP000005640">
    <property type="component" value="Chromosome 9"/>
</dbReference>
<dbReference type="RNAct" id="Q8N8K9">
    <property type="molecule type" value="protein"/>
</dbReference>
<dbReference type="Bgee" id="ENSG00000165185">
    <property type="expression patterns" value="Expressed in primordial germ cell in gonad and 163 other cell types or tissues"/>
</dbReference>
<dbReference type="InterPro" id="IPR021893">
    <property type="entry name" value="DUF3504"/>
</dbReference>
<dbReference type="InterPro" id="IPR042838">
    <property type="entry name" value="KIAA1958"/>
</dbReference>
<dbReference type="PANTHER" id="PTHR46963">
    <property type="entry name" value="SIMILAR TO RIKEN CDNA E130308A19"/>
    <property type="match status" value="1"/>
</dbReference>
<dbReference type="PANTHER" id="PTHR46963:SF1">
    <property type="entry name" value="SIMILAR TO RIKEN CDNA E130308A19"/>
    <property type="match status" value="1"/>
</dbReference>
<dbReference type="Pfam" id="PF12012">
    <property type="entry name" value="DUF3504"/>
    <property type="match status" value="1"/>
</dbReference>